<keyword id="KW-0249">Electron transport</keyword>
<keyword id="KW-0408">Iron</keyword>
<keyword id="KW-0479">Metal-binding</keyword>
<keyword id="KW-0520">NAD</keyword>
<keyword id="KW-0560">Oxidoreductase</keyword>
<keyword id="KW-0575">Peroxidase</keyword>
<keyword id="KW-1185">Reference proteome</keyword>
<keyword id="KW-0813">Transport</keyword>
<gene>
    <name type="primary">rbr2</name>
    <name type="ordered locus">CA_C3018</name>
</gene>
<feature type="chain" id="PRO_0000405533" description="Rubrerythrin-2">
    <location>
        <begin position="1"/>
        <end position="184"/>
    </location>
</feature>
<feature type="domain" description="Ferritin-like diiron" evidence="3">
    <location>
        <begin position="2"/>
        <end position="146"/>
    </location>
</feature>
<feature type="domain" description="Rubredoxin-like" evidence="4">
    <location>
        <begin position="151"/>
        <end position="184"/>
    </location>
</feature>
<feature type="binding site" evidence="2">
    <location>
        <position position="19"/>
    </location>
    <ligand>
        <name>Fe(3+)</name>
        <dbReference type="ChEBI" id="CHEBI:29034"/>
        <label>1</label>
    </ligand>
</feature>
<feature type="binding site" evidence="2">
    <location>
        <position position="52"/>
    </location>
    <ligand>
        <name>Fe(3+)</name>
        <dbReference type="ChEBI" id="CHEBI:29034"/>
        <label>1</label>
    </ligand>
</feature>
<feature type="binding site" evidence="2">
    <location>
        <position position="52"/>
    </location>
    <ligand>
        <name>Fe(3+)</name>
        <dbReference type="ChEBI" id="CHEBI:29034"/>
        <label>2</label>
    </ligand>
</feature>
<feature type="binding site" evidence="2">
    <location>
        <position position="94"/>
    </location>
    <ligand>
        <name>Fe(3+)</name>
        <dbReference type="ChEBI" id="CHEBI:29034"/>
        <label>2</label>
    </ligand>
</feature>
<feature type="binding site" evidence="2">
    <location>
        <position position="97"/>
    </location>
    <ligand>
        <name>Fe(3+)</name>
        <dbReference type="ChEBI" id="CHEBI:29034"/>
        <label>1</label>
    </ligand>
</feature>
<feature type="binding site" evidence="2">
    <location>
        <position position="128"/>
    </location>
    <ligand>
        <name>Fe(3+)</name>
        <dbReference type="ChEBI" id="CHEBI:29034"/>
        <label>1</label>
    </ligand>
</feature>
<feature type="binding site" evidence="2">
    <location>
        <position position="128"/>
    </location>
    <ligand>
        <name>Fe(3+)</name>
        <dbReference type="ChEBI" id="CHEBI:29034"/>
        <label>2</label>
    </ligand>
</feature>
<feature type="binding site" evidence="2">
    <location>
        <position position="131"/>
    </location>
    <ligand>
        <name>Fe(3+)</name>
        <dbReference type="ChEBI" id="CHEBI:29034"/>
        <label>2</label>
    </ligand>
</feature>
<feature type="binding site" evidence="2">
    <location>
        <position position="156"/>
    </location>
    <ligand>
        <name>Fe(3+)</name>
        <dbReference type="ChEBI" id="CHEBI:29034"/>
        <label>3</label>
    </ligand>
</feature>
<feature type="binding site" evidence="2">
    <location>
        <position position="159"/>
    </location>
    <ligand>
        <name>Fe(3+)</name>
        <dbReference type="ChEBI" id="CHEBI:29034"/>
        <label>3</label>
    </ligand>
</feature>
<feature type="binding site" evidence="2">
    <location>
        <position position="171"/>
    </location>
    <ligand>
        <name>Fe(3+)</name>
        <dbReference type="ChEBI" id="CHEBI:29034"/>
        <label>3</label>
    </ligand>
</feature>
<feature type="binding site" evidence="2">
    <location>
        <position position="174"/>
    </location>
    <ligand>
        <name>Fe(3+)</name>
        <dbReference type="ChEBI" id="CHEBI:29034"/>
        <label>3</label>
    </ligand>
</feature>
<name>RUBY2_CLOAB</name>
<accession>Q97ET8</accession>
<protein>
    <recommendedName>
        <fullName>Rubrerythrin-2</fullName>
        <shortName>Rr 2</shortName>
    </recommendedName>
    <alternativeName>
        <fullName>NADH peroxidase</fullName>
        <shortName>NPXase</shortName>
        <shortName>Npx</shortName>
        <ecNumber>1.11.1.1</ecNumber>
    </alternativeName>
</protein>
<dbReference type="EC" id="1.11.1.1"/>
<dbReference type="EMBL" id="AE001437">
    <property type="protein sequence ID" value="AAK80959.1"/>
    <property type="molecule type" value="Genomic_DNA"/>
</dbReference>
<dbReference type="PIR" id="D97271">
    <property type="entry name" value="D97271"/>
</dbReference>
<dbReference type="RefSeq" id="NP_349619.1">
    <property type="nucleotide sequence ID" value="NC_003030.1"/>
</dbReference>
<dbReference type="RefSeq" id="WP_010966300.1">
    <property type="nucleotide sequence ID" value="NC_003030.1"/>
</dbReference>
<dbReference type="SMR" id="Q97ET8"/>
<dbReference type="STRING" id="272562.CA_C3018"/>
<dbReference type="GeneID" id="44999505"/>
<dbReference type="KEGG" id="cac:CA_C3018"/>
<dbReference type="PATRIC" id="fig|272562.8.peg.3201"/>
<dbReference type="eggNOG" id="COG1592">
    <property type="taxonomic scope" value="Bacteria"/>
</dbReference>
<dbReference type="HOGENOM" id="CLU_095256_1_0_9"/>
<dbReference type="OrthoDB" id="9799749at2"/>
<dbReference type="Proteomes" id="UP000000814">
    <property type="component" value="Chromosome"/>
</dbReference>
<dbReference type="GO" id="GO:0005506">
    <property type="term" value="F:iron ion binding"/>
    <property type="evidence" value="ECO:0007669"/>
    <property type="project" value="InterPro"/>
</dbReference>
<dbReference type="GO" id="GO:0016692">
    <property type="term" value="F:NADH peroxidase activity"/>
    <property type="evidence" value="ECO:0007669"/>
    <property type="project" value="UniProtKB-EC"/>
</dbReference>
<dbReference type="CDD" id="cd00729">
    <property type="entry name" value="rubredoxin_SM"/>
    <property type="match status" value="1"/>
</dbReference>
<dbReference type="CDD" id="cd01041">
    <property type="entry name" value="Rubrerythrin"/>
    <property type="match status" value="1"/>
</dbReference>
<dbReference type="Gene3D" id="1.20.1260.10">
    <property type="match status" value="1"/>
</dbReference>
<dbReference type="Gene3D" id="2.20.28.10">
    <property type="match status" value="1"/>
</dbReference>
<dbReference type="InterPro" id="IPR012347">
    <property type="entry name" value="Ferritin-like"/>
</dbReference>
<dbReference type="InterPro" id="IPR009040">
    <property type="entry name" value="Ferritin-like_diiron"/>
</dbReference>
<dbReference type="InterPro" id="IPR009078">
    <property type="entry name" value="Ferritin-like_SF"/>
</dbReference>
<dbReference type="InterPro" id="IPR052753">
    <property type="entry name" value="Rbr2/Nigerythrin"/>
</dbReference>
<dbReference type="InterPro" id="IPR003251">
    <property type="entry name" value="Rr_diiron-bd_dom"/>
</dbReference>
<dbReference type="InterPro" id="IPR024934">
    <property type="entry name" value="Rubredoxin-like_dom"/>
</dbReference>
<dbReference type="InterPro" id="IPR048574">
    <property type="entry name" value="RUBY_RBDX"/>
</dbReference>
<dbReference type="PANTHER" id="PTHR33746">
    <property type="entry name" value="RUBRERYTHRIN"/>
    <property type="match status" value="1"/>
</dbReference>
<dbReference type="PANTHER" id="PTHR33746:SF4">
    <property type="entry name" value="RUBRERYTHRIN"/>
    <property type="match status" value="1"/>
</dbReference>
<dbReference type="Pfam" id="PF02915">
    <property type="entry name" value="Rubrerythrin"/>
    <property type="match status" value="1"/>
</dbReference>
<dbReference type="Pfam" id="PF21349">
    <property type="entry name" value="RUBY_RBDX"/>
    <property type="match status" value="1"/>
</dbReference>
<dbReference type="SUPFAM" id="SSF47240">
    <property type="entry name" value="Ferritin-like"/>
    <property type="match status" value="1"/>
</dbReference>
<dbReference type="SUPFAM" id="SSF57802">
    <property type="entry name" value="Rubredoxin-like"/>
    <property type="match status" value="1"/>
</dbReference>
<dbReference type="PROSITE" id="PS50905">
    <property type="entry name" value="FERRITIN_LIKE"/>
    <property type="match status" value="1"/>
</dbReference>
<dbReference type="PROSITE" id="PS50903">
    <property type="entry name" value="RUBREDOXIN_LIKE"/>
    <property type="match status" value="1"/>
</dbReference>
<proteinExistence type="evidence at transcript level"/>
<comment type="function">
    <text evidence="1">Functions as the terminal component of an NADH peroxidase (NADH:H(2)O(2) oxidoreductase) when using NADH:rubredoxin oxidoreductase (NROR) as the electron transport intermediary from NADH to Rbr2.</text>
</comment>
<comment type="catalytic activity">
    <reaction>
        <text>H2O2 + NADH + H(+) = NAD(+) + 2 H2O</text>
        <dbReference type="Rhea" id="RHEA:18509"/>
        <dbReference type="ChEBI" id="CHEBI:15377"/>
        <dbReference type="ChEBI" id="CHEBI:15378"/>
        <dbReference type="ChEBI" id="CHEBI:16240"/>
        <dbReference type="ChEBI" id="CHEBI:57540"/>
        <dbReference type="ChEBI" id="CHEBI:57945"/>
        <dbReference type="EC" id="1.11.1.1"/>
    </reaction>
</comment>
<comment type="cofactor">
    <cofactor evidence="1">
        <name>Fe(3+)</name>
        <dbReference type="ChEBI" id="CHEBI:29034"/>
    </cofactor>
    <text evidence="1">Binds 3 Fe(3+) ions per subunit.</text>
</comment>
<comment type="activity regulation">
    <text evidence="1">Rubredoxin (Rd) increases the NADH consumption rate by serving as an intermediary electron-transfer shuttle between NROR and Rbr2.</text>
</comment>
<comment type="induction">
    <text evidence="5">Various environmental stress conditions, e.g. oxidative stress (exposure to H(2)O(2)) and other stress factors such as salt, increased pH, high concentration of solvents or cold shock, do not lead to increased transcript levels of this gene. However, PubMed:15336429 shows that rbr2 is slightly up-regulated after exposure to air, but PubMed:19648241 shows it does not respond to the presence of O(2). Is not repressed by PerR.</text>
</comment>
<organism>
    <name type="scientific">Clostridium acetobutylicum (strain ATCC 824 / DSM 792 / JCM 1419 / IAM 19013 / LMG 5710 / NBRC 13948 / NRRL B-527 / VKM B-1787 / 2291 / W)</name>
    <dbReference type="NCBI Taxonomy" id="272562"/>
    <lineage>
        <taxon>Bacteria</taxon>
        <taxon>Bacillati</taxon>
        <taxon>Bacillota</taxon>
        <taxon>Clostridia</taxon>
        <taxon>Eubacteriales</taxon>
        <taxon>Clostridiaceae</taxon>
        <taxon>Clostridium</taxon>
    </lineage>
</organism>
<sequence>MSVKNAMTADFLRSAYGGESMAHMRYLIWGEEAENSNYPNIGRLFKAIAYSEHIHAKNHFNVLKEDLYDSSVVAGAVFGSTNLIDNLQGAINGELHEIKQMYPVYLETARYQEEKEAERTFHYALEAEKIHAKLFQDAQDSAKENKDINIGKVYICPVCGFTTLDENIEQCPICGVKKDKFQAF</sequence>
<evidence type="ECO:0000250" key="1"/>
<evidence type="ECO:0000250" key="2">
    <source>
        <dbReference type="UniProtKB" id="P24931"/>
    </source>
</evidence>
<evidence type="ECO:0000255" key="3">
    <source>
        <dbReference type="PROSITE-ProRule" id="PRU00085"/>
    </source>
</evidence>
<evidence type="ECO:0000255" key="4">
    <source>
        <dbReference type="PROSITE-ProRule" id="PRU00241"/>
    </source>
</evidence>
<evidence type="ECO:0000269" key="5">
    <source>
    </source>
</evidence>
<reference key="1">
    <citation type="journal article" date="2001" name="J. Bacteriol.">
        <title>Genome sequence and comparative analysis of the solvent-producing bacterium Clostridium acetobutylicum.</title>
        <authorList>
            <person name="Noelling J."/>
            <person name="Breton G."/>
            <person name="Omelchenko M.V."/>
            <person name="Makarova K.S."/>
            <person name="Zeng Q."/>
            <person name="Gibson R."/>
            <person name="Lee H.M."/>
            <person name="Dubois J."/>
            <person name="Qiu D."/>
            <person name="Hitti J."/>
            <person name="Wolf Y.I."/>
            <person name="Tatusov R.L."/>
            <person name="Sabathe F."/>
            <person name="Doucette-Stamm L.A."/>
            <person name="Soucaille P."/>
            <person name="Daly M.J."/>
            <person name="Bennett G.N."/>
            <person name="Koonin E.V."/>
            <person name="Smith D.R."/>
        </authorList>
    </citation>
    <scope>NUCLEOTIDE SEQUENCE [LARGE SCALE GENOMIC DNA]</scope>
    <source>
        <strain>ATCC 824 / DSM 792 / JCM 1419 / IAM 19013 / LMG 5710 / NBRC 13948 / NRRL B-527 / VKM B-1787 / 2291 / W</strain>
    </source>
</reference>
<reference key="2">
    <citation type="journal article" date="2004" name="FEMS Microbiol. Lett.">
        <title>A rubrerythrin-like oxidative stress protein of Clostridium acetobutylicum is encoded by a duplicated gene and identical to the heat shock protein Hsp21.</title>
        <authorList>
            <person name="May A."/>
            <person name="Hillmann F."/>
            <person name="Riebe O."/>
            <person name="Fischer R.J."/>
            <person name="Bahl H."/>
        </authorList>
    </citation>
    <scope>GENE NAME</scope>
    <scope>INDUCTION</scope>
    <source>
        <strain>ATCC 824 / DSM 792 / JCM 1419 / IAM 19013 / LMG 5710 / NBRC 13948 / NRRL B-527 / VKM B-1787 / 2291 / W</strain>
    </source>
</reference>
<reference key="3">
    <citation type="journal article" date="2006" name="Arch. Microbiol.">
        <title>The rubrerythrin-like protein Hsp21 of Clostridium acetobutylicum is a general stress protein.</title>
        <authorList>
            <person name="Hillmann F."/>
            <person name="Fischer R.J."/>
            <person name="Bahl H."/>
        </authorList>
    </citation>
    <scope>NO INDUCTION BY VARIOUS ENVIRONMENTAL STRESS CONDITIONS</scope>
    <source>
        <strain>ATCC 824 / DSM 792 / JCM 1419 / IAM 19013 / LMG 5710 / NBRC 13948 / NRRL B-527 / VKM B-1787 / 2291 / W</strain>
    </source>
</reference>
<reference key="4">
    <citation type="journal article" date="2008" name="Mol. Microbiol.">
        <title>PerR acts as a switch for oxygen tolerance in the strict anaerobe Clostridium acetobutylicum.</title>
        <authorList>
            <person name="Hillmann F."/>
            <person name="Fischer R.J."/>
            <person name="Saint-Prix F."/>
            <person name="Girbal L."/>
            <person name="Bahl H."/>
        </authorList>
    </citation>
    <scope>NO REPRESSION BY PERR</scope>
    <source>
        <strain>ATCC 824 / DSM 792 / JCM 1419 / IAM 19013 / LMG 5710 / NBRC 13948 / NRRL B-527 / VKM B-1787 / 2291 / W</strain>
    </source>
</reference>
<reference key="5">
    <citation type="journal article" date="2009" name="J. Bacteriol.">
        <title>The role of PerR in O2-affected gene expression of Clostridium acetobutylicum.</title>
        <authorList>
            <person name="Hillmann F."/>
            <person name="Doring C."/>
            <person name="Riebe O."/>
            <person name="Ehrenreich A."/>
            <person name="Fischer R.J."/>
            <person name="Bahl H."/>
        </authorList>
    </citation>
    <scope>NO INDUCTION BY O(2)</scope>
    <scope>NO REPRESSION BY PERR</scope>
    <source>
        <strain>ATCC 824 / DSM 792 / JCM 1419 / IAM 19013 / LMG 5710 / NBRC 13948 / NRRL B-527 / VKM B-1787 / 2291 / W</strain>
    </source>
</reference>